<gene>
    <name type="ordered locus">BQ2027_MB0995</name>
</gene>
<dbReference type="EMBL" id="LT708304">
    <property type="protein sequence ID" value="SIT99594.1"/>
    <property type="molecule type" value="Genomic_DNA"/>
</dbReference>
<dbReference type="RefSeq" id="NP_854652.1">
    <property type="nucleotide sequence ID" value="NC_002945.3"/>
</dbReference>
<dbReference type="RefSeq" id="WP_003898666.1">
    <property type="nucleotide sequence ID" value="NC_002945.4"/>
</dbReference>
<dbReference type="KEGG" id="mbo:BQ2027_MB0995"/>
<dbReference type="PATRIC" id="fig|233413.5.peg.1084"/>
<dbReference type="Proteomes" id="UP000001419">
    <property type="component" value="Chromosome"/>
</dbReference>
<dbReference type="GO" id="GO:0005886">
    <property type="term" value="C:plasma membrane"/>
    <property type="evidence" value="ECO:0007669"/>
    <property type="project" value="UniProtKB-SubCell"/>
</dbReference>
<dbReference type="InterPro" id="IPR033458">
    <property type="entry name" value="DUF5134"/>
</dbReference>
<dbReference type="Pfam" id="PF17197">
    <property type="entry name" value="DUF5134"/>
    <property type="match status" value="1"/>
</dbReference>
<proteinExistence type="predicted"/>
<protein>
    <recommendedName>
        <fullName>Uncharacterized protein Mb0995</fullName>
    </recommendedName>
</protein>
<keyword id="KW-1003">Cell membrane</keyword>
<keyword id="KW-0472">Membrane</keyword>
<keyword id="KW-1185">Reference proteome</keyword>
<keyword id="KW-0812">Transmembrane</keyword>
<keyword id="KW-1133">Transmembrane helix</keyword>
<name>Y995_MYCBO</name>
<organism>
    <name type="scientific">Mycobacterium bovis (strain ATCC BAA-935 / AF2122/97)</name>
    <dbReference type="NCBI Taxonomy" id="233413"/>
    <lineage>
        <taxon>Bacteria</taxon>
        <taxon>Bacillati</taxon>
        <taxon>Actinomycetota</taxon>
        <taxon>Actinomycetes</taxon>
        <taxon>Mycobacteriales</taxon>
        <taxon>Mycobacteriaceae</taxon>
        <taxon>Mycobacterium</taxon>
        <taxon>Mycobacterium tuberculosis complex</taxon>
    </lineage>
</organism>
<feature type="chain" id="PRO_0000103768" description="Uncharacterized protein Mb0995">
    <location>
        <begin position="1"/>
        <end position="210"/>
    </location>
</feature>
<feature type="transmembrane region" description="Helical" evidence="1">
    <location>
        <begin position="9"/>
        <end position="29"/>
    </location>
</feature>
<feature type="transmembrane region" description="Helical" evidence="1">
    <location>
        <begin position="35"/>
        <end position="55"/>
    </location>
</feature>
<feature type="transmembrane region" description="Helical" evidence="1">
    <location>
        <begin position="64"/>
        <end position="84"/>
    </location>
</feature>
<feature type="transmembrane region" description="Helical" evidence="1">
    <location>
        <begin position="91"/>
        <end position="111"/>
    </location>
</feature>
<feature type="transmembrane region" description="Helical" evidence="1">
    <location>
        <begin position="149"/>
        <end position="169"/>
    </location>
</feature>
<feature type="transmembrane region" description="Helical" evidence="1">
    <location>
        <begin position="190"/>
        <end position="210"/>
    </location>
</feature>
<evidence type="ECO:0000255" key="1"/>
<evidence type="ECO:0000305" key="2"/>
<sequence>MIHDLMLRWVVTGLFVLTAAECGLAIIAKRRPWTLIVNHGLHFAMAVAMAVMAWPWGARVPTTGPAVFFLLAAVWFGATAVVAVRGTATRGLYGYHGLMMLATAWMYAAMNPRLLPVRSCTEYATEPDGSMPAMDMTAMNMPPNSGSPIWFSAVNWIGTVGFAVAAVFWACRFVMERRQEATQSRLPGSIGQAMMAAGMAMLFFAMLFPV</sequence>
<accession>P64782</accession>
<accession>A0A1R3XX08</accession>
<accession>P71541</accession>
<accession>X2BGU9</accession>
<reference key="1">
    <citation type="journal article" date="2003" name="Proc. Natl. Acad. Sci. U.S.A.">
        <title>The complete genome sequence of Mycobacterium bovis.</title>
        <authorList>
            <person name="Garnier T."/>
            <person name="Eiglmeier K."/>
            <person name="Camus J.-C."/>
            <person name="Medina N."/>
            <person name="Mansoor H."/>
            <person name="Pryor M."/>
            <person name="Duthoy S."/>
            <person name="Grondin S."/>
            <person name="Lacroix C."/>
            <person name="Monsempe C."/>
            <person name="Simon S."/>
            <person name="Harris B."/>
            <person name="Atkin R."/>
            <person name="Doggett J."/>
            <person name="Mayes R."/>
            <person name="Keating L."/>
            <person name="Wheeler P.R."/>
            <person name="Parkhill J."/>
            <person name="Barrell B.G."/>
            <person name="Cole S.T."/>
            <person name="Gordon S.V."/>
            <person name="Hewinson R.G."/>
        </authorList>
    </citation>
    <scope>NUCLEOTIDE SEQUENCE [LARGE SCALE GENOMIC DNA]</scope>
    <source>
        <strain>ATCC BAA-935 / AF2122/97</strain>
    </source>
</reference>
<reference key="2">
    <citation type="journal article" date="2017" name="Genome Announc.">
        <title>Updated reference genome sequence and annotation of Mycobacterium bovis AF2122/97.</title>
        <authorList>
            <person name="Malone K.M."/>
            <person name="Farrell D."/>
            <person name="Stuber T.P."/>
            <person name="Schubert O.T."/>
            <person name="Aebersold R."/>
            <person name="Robbe-Austerman S."/>
            <person name="Gordon S.V."/>
        </authorList>
    </citation>
    <scope>NUCLEOTIDE SEQUENCE [LARGE SCALE GENOMIC DNA]</scope>
    <scope>GENOME REANNOTATION</scope>
    <source>
        <strain>ATCC BAA-935 / AF2122/97</strain>
    </source>
</reference>
<comment type="subcellular location">
    <subcellularLocation>
        <location evidence="2">Cell membrane</location>
        <topology evidence="2">Multi-pass membrane protein</topology>
    </subcellularLocation>
</comment>